<comment type="function">
    <text evidence="3">Is able to catalyze the hydrolysis of aryl-phospho-beta-D-glucosides such as 4-methylumbelliferyl-phospho-beta-D-glucopyranoside (MUG-P), phosphoarbutin and phosphosalicin. Is not essential for growth on arbutin and salicin as the sole carbon source.</text>
</comment>
<comment type="catalytic activity">
    <reaction>
        <text>6-phospho-beta-D-glucosyl-(1-&gt;4)-D-glucose + H2O = D-glucose 6-phosphate + D-glucose</text>
        <dbReference type="Rhea" id="RHEA:10772"/>
        <dbReference type="ChEBI" id="CHEBI:4167"/>
        <dbReference type="ChEBI" id="CHEBI:15377"/>
        <dbReference type="ChEBI" id="CHEBI:58312"/>
        <dbReference type="ChEBI" id="CHEBI:61548"/>
        <dbReference type="EC" id="3.2.1.86"/>
    </reaction>
</comment>
<comment type="developmental stage">
    <text evidence="3">Expressed at a low and constant level during growth, sporulation, and spore germination.</text>
</comment>
<comment type="induction">
    <text evidence="3">Is not induced by aryl-beta-D-glucosides such as arbutin, salicin or 4-methylumbelliferyl-beta-D-glucopyranoside (MUG). Is not repressed by glucose.</text>
</comment>
<comment type="similarity">
    <text evidence="4">Belongs to the glycosyl hydrolase 1 family.</text>
</comment>
<keyword id="KW-0119">Carbohydrate metabolism</keyword>
<keyword id="KW-0326">Glycosidase</keyword>
<keyword id="KW-0378">Hydrolase</keyword>
<keyword id="KW-1185">Reference proteome</keyword>
<feature type="chain" id="PRO_0000063874" description="Aryl-phospho-beta-D-glucosidase BglC">
    <location>
        <begin position="1"/>
        <end position="477"/>
    </location>
</feature>
<feature type="active site" description="Proton donor" evidence="1">
    <location>
        <position position="170"/>
    </location>
</feature>
<feature type="active site" description="Nucleophile" evidence="2">
    <location>
        <position position="378"/>
    </location>
</feature>
<protein>
    <recommendedName>
        <fullName>Aryl-phospho-beta-D-glucosidase BglC</fullName>
        <ecNumber>3.2.1.86</ecNumber>
    </recommendedName>
    <alternativeName>
        <fullName>6-phospho-beta-glucosidase</fullName>
    </alternativeName>
</protein>
<evidence type="ECO:0000255" key="1"/>
<evidence type="ECO:0000255" key="2">
    <source>
        <dbReference type="PROSITE-ProRule" id="PRU10055"/>
    </source>
</evidence>
<evidence type="ECO:0000269" key="3">
    <source>
    </source>
</evidence>
<evidence type="ECO:0000305" key="4"/>
<organism>
    <name type="scientific">Bacillus subtilis (strain 168)</name>
    <dbReference type="NCBI Taxonomy" id="224308"/>
    <lineage>
        <taxon>Bacteria</taxon>
        <taxon>Bacillati</taxon>
        <taxon>Bacillota</taxon>
        <taxon>Bacilli</taxon>
        <taxon>Bacillales</taxon>
        <taxon>Bacillaceae</taxon>
        <taxon>Bacillus</taxon>
    </lineage>
</organism>
<name>BGLC_BACSU</name>
<sequence length="477" mass="55140">MIHQHPESFPKHFLWGSASAAYQIEGAWNEDGKGPSVWDVFTKIPGKTFKGTNGEIAVDHYHRFKEDVALMAEMGLKAYRFSVSWPRVFPKGKGEINEAGLAFYDSLIDELLSHHIEPVLTLYHWDLPQALMDEYGGFESRNIIEDFNHYCITLYKRFGDRVKYWVTLNEQNYNFNHGFITAMHPPGVKDRKRFYEANHIAFLANAKAIESFREYVPEGKIGPSFAYSPAYPLSSHPEDILAFENAEEFTNNWWLDMYCWGTYPQIPFRCLEKQGWAPTIEAGDMDLLAKGKPDFVGVNYYQTITYERNPLDGVSEGKMNTTGQKGTNQETGIPGVFKTKKNPHLTTSNWDWTIDPIGLRIGLRRITSRYQLPVFITENGLGEFDKVEDGTVQDDYRIDYLRSHLEQCRQAISDGVDLIGYCSWSFTDLLSWLNGYQKRYGFVYVNRDEESTSDLKRLKKKSFYWYQDVIKTNGESL</sequence>
<gene>
    <name type="primary">bglC</name>
    <name type="synonym">yckE</name>
    <name type="ordered locus">BSU03410</name>
</gene>
<reference key="1">
    <citation type="journal article" date="1995" name="Microbiology">
        <title>A 10 kb nucleotide sequence at the 5' flanking region (32 degrees) of srfAA of the Bacillus subtilis chromosome.</title>
        <authorList>
            <person name="Fujishima Y."/>
            <person name="Yamane K."/>
        </authorList>
    </citation>
    <scope>NUCLEOTIDE SEQUENCE [GENOMIC DNA]</scope>
    <source>
        <strain>168</strain>
    </source>
</reference>
<reference key="2">
    <citation type="journal article" date="1996" name="Microbiology">
        <title>The 25 degrees-36 degrees region of the Bacillus subtilis chromosome: determination of the sequence of a 146 kb segment and identification of 113 genes.</title>
        <authorList>
            <person name="Yamane K."/>
            <person name="Kumano M."/>
            <person name="Kurita K."/>
        </authorList>
    </citation>
    <scope>NUCLEOTIDE SEQUENCE [GENOMIC DNA]</scope>
    <source>
        <strain>168</strain>
    </source>
</reference>
<reference key="3">
    <citation type="journal article" date="1997" name="Nature">
        <title>The complete genome sequence of the Gram-positive bacterium Bacillus subtilis.</title>
        <authorList>
            <person name="Kunst F."/>
            <person name="Ogasawara N."/>
            <person name="Moszer I."/>
            <person name="Albertini A.M."/>
            <person name="Alloni G."/>
            <person name="Azevedo V."/>
            <person name="Bertero M.G."/>
            <person name="Bessieres P."/>
            <person name="Bolotin A."/>
            <person name="Borchert S."/>
            <person name="Borriss R."/>
            <person name="Boursier L."/>
            <person name="Brans A."/>
            <person name="Braun M."/>
            <person name="Brignell S.C."/>
            <person name="Bron S."/>
            <person name="Brouillet S."/>
            <person name="Bruschi C.V."/>
            <person name="Caldwell B."/>
            <person name="Capuano V."/>
            <person name="Carter N.M."/>
            <person name="Choi S.-K."/>
            <person name="Codani J.-J."/>
            <person name="Connerton I.F."/>
            <person name="Cummings N.J."/>
            <person name="Daniel R.A."/>
            <person name="Denizot F."/>
            <person name="Devine K.M."/>
            <person name="Duesterhoeft A."/>
            <person name="Ehrlich S.D."/>
            <person name="Emmerson P.T."/>
            <person name="Entian K.-D."/>
            <person name="Errington J."/>
            <person name="Fabret C."/>
            <person name="Ferrari E."/>
            <person name="Foulger D."/>
            <person name="Fritz C."/>
            <person name="Fujita M."/>
            <person name="Fujita Y."/>
            <person name="Fuma S."/>
            <person name="Galizzi A."/>
            <person name="Galleron N."/>
            <person name="Ghim S.-Y."/>
            <person name="Glaser P."/>
            <person name="Goffeau A."/>
            <person name="Golightly E.J."/>
            <person name="Grandi G."/>
            <person name="Guiseppi G."/>
            <person name="Guy B.J."/>
            <person name="Haga K."/>
            <person name="Haiech J."/>
            <person name="Harwood C.R."/>
            <person name="Henaut A."/>
            <person name="Hilbert H."/>
            <person name="Holsappel S."/>
            <person name="Hosono S."/>
            <person name="Hullo M.-F."/>
            <person name="Itaya M."/>
            <person name="Jones L.-M."/>
            <person name="Joris B."/>
            <person name="Karamata D."/>
            <person name="Kasahara Y."/>
            <person name="Klaerr-Blanchard M."/>
            <person name="Klein C."/>
            <person name="Kobayashi Y."/>
            <person name="Koetter P."/>
            <person name="Koningstein G."/>
            <person name="Krogh S."/>
            <person name="Kumano M."/>
            <person name="Kurita K."/>
            <person name="Lapidus A."/>
            <person name="Lardinois S."/>
            <person name="Lauber J."/>
            <person name="Lazarevic V."/>
            <person name="Lee S.-M."/>
            <person name="Levine A."/>
            <person name="Liu H."/>
            <person name="Masuda S."/>
            <person name="Mauel C."/>
            <person name="Medigue C."/>
            <person name="Medina N."/>
            <person name="Mellado R.P."/>
            <person name="Mizuno M."/>
            <person name="Moestl D."/>
            <person name="Nakai S."/>
            <person name="Noback M."/>
            <person name="Noone D."/>
            <person name="O'Reilly M."/>
            <person name="Ogawa K."/>
            <person name="Ogiwara A."/>
            <person name="Oudega B."/>
            <person name="Park S.-H."/>
            <person name="Parro V."/>
            <person name="Pohl T.M."/>
            <person name="Portetelle D."/>
            <person name="Porwollik S."/>
            <person name="Prescott A.M."/>
            <person name="Presecan E."/>
            <person name="Pujic P."/>
            <person name="Purnelle B."/>
            <person name="Rapoport G."/>
            <person name="Rey M."/>
            <person name="Reynolds S."/>
            <person name="Rieger M."/>
            <person name="Rivolta C."/>
            <person name="Rocha E."/>
            <person name="Roche B."/>
            <person name="Rose M."/>
            <person name="Sadaie Y."/>
            <person name="Sato T."/>
            <person name="Scanlan E."/>
            <person name="Schleich S."/>
            <person name="Schroeter R."/>
            <person name="Scoffone F."/>
            <person name="Sekiguchi J."/>
            <person name="Sekowska A."/>
            <person name="Seror S.J."/>
            <person name="Serror P."/>
            <person name="Shin B.-S."/>
            <person name="Soldo B."/>
            <person name="Sorokin A."/>
            <person name="Tacconi E."/>
            <person name="Takagi T."/>
            <person name="Takahashi H."/>
            <person name="Takemaru K."/>
            <person name="Takeuchi M."/>
            <person name="Tamakoshi A."/>
            <person name="Tanaka T."/>
            <person name="Terpstra P."/>
            <person name="Tognoni A."/>
            <person name="Tosato V."/>
            <person name="Uchiyama S."/>
            <person name="Vandenbol M."/>
            <person name="Vannier F."/>
            <person name="Vassarotti A."/>
            <person name="Viari A."/>
            <person name="Wambutt R."/>
            <person name="Wedler E."/>
            <person name="Wedler H."/>
            <person name="Weitzenegger T."/>
            <person name="Winters P."/>
            <person name="Wipat A."/>
            <person name="Yamamoto H."/>
            <person name="Yamane K."/>
            <person name="Yasumoto K."/>
            <person name="Yata K."/>
            <person name="Yoshida K."/>
            <person name="Yoshikawa H.-F."/>
            <person name="Zumstein E."/>
            <person name="Yoshikawa H."/>
            <person name="Danchin A."/>
        </authorList>
    </citation>
    <scope>NUCLEOTIDE SEQUENCE [LARGE SCALE GENOMIC DNA]</scope>
    <source>
        <strain>168</strain>
    </source>
</reference>
<reference key="4">
    <citation type="journal article" date="1988" name="J. Bacteriol.">
        <title>Transformation in Bacillus subtilis: involvement of the 17-kilodalton DNA-entry nuclease and the competence-specific 18-kilodalton protein.</title>
        <authorList>
            <person name="Vosman B."/>
            <person name="Kuiken G."/>
            <person name="Kooistra J."/>
            <person name="Venema G."/>
        </authorList>
    </citation>
    <scope>NUCLEOTIDE SEQUENCE [GENOMIC DNA] OF 461-477</scope>
</reference>
<reference key="5">
    <citation type="journal article" date="2004" name="Arch. Microbiol.">
        <title>Identification of aryl-phospho-beta-D-glucosidases in Bacillus subtilis.</title>
        <authorList>
            <person name="Setlow B."/>
            <person name="Cabrera-Hernandez A."/>
            <person name="Cabrera-Martinez R.M."/>
            <person name="Setlow P."/>
        </authorList>
    </citation>
    <scope>FUNCTION AS AN ARYL-PHOSPHO-BETA-D-GLUCOSIDASE</scope>
    <scope>DEVELOPMENTAL STAGE</scope>
    <scope>INDUCTION</scope>
    <scope>GENE NAME</scope>
    <source>
        <strain>168 / PS832</strain>
    </source>
</reference>
<accession>P42403</accession>
<dbReference type="EC" id="3.2.1.86"/>
<dbReference type="EMBL" id="D30762">
    <property type="protein sequence ID" value="BAA06429.1"/>
    <property type="molecule type" value="Genomic_DNA"/>
</dbReference>
<dbReference type="EMBL" id="D50453">
    <property type="protein sequence ID" value="BAA08975.1"/>
    <property type="molecule type" value="Genomic_DNA"/>
</dbReference>
<dbReference type="EMBL" id="AL009126">
    <property type="protein sequence ID" value="CAB12135.1"/>
    <property type="molecule type" value="Genomic_DNA"/>
</dbReference>
<dbReference type="EMBL" id="M21672">
    <property type="status" value="NOT_ANNOTATED_CDS"/>
    <property type="molecule type" value="Genomic_DNA"/>
</dbReference>
<dbReference type="PIR" id="G69760">
    <property type="entry name" value="G69760"/>
</dbReference>
<dbReference type="RefSeq" id="NP_388223.1">
    <property type="nucleotide sequence ID" value="NC_000964.3"/>
</dbReference>
<dbReference type="RefSeq" id="WP_003246242.1">
    <property type="nucleotide sequence ID" value="NZ_OZ025638.1"/>
</dbReference>
<dbReference type="SMR" id="P42403"/>
<dbReference type="FunCoup" id="P42403">
    <property type="interactions" value="237"/>
</dbReference>
<dbReference type="STRING" id="224308.BSU03410"/>
<dbReference type="CAZy" id="GH1">
    <property type="family name" value="Glycoside Hydrolase Family 1"/>
</dbReference>
<dbReference type="PaxDb" id="224308-BSU03410"/>
<dbReference type="EnsemblBacteria" id="CAB12135">
    <property type="protein sequence ID" value="CAB12135"/>
    <property type="gene ID" value="BSU_03410"/>
</dbReference>
<dbReference type="GeneID" id="938317"/>
<dbReference type="KEGG" id="bsu:BSU03410"/>
<dbReference type="PATRIC" id="fig|224308.179.peg.358"/>
<dbReference type="eggNOG" id="COG2723">
    <property type="taxonomic scope" value="Bacteria"/>
</dbReference>
<dbReference type="InParanoid" id="P42403"/>
<dbReference type="OrthoDB" id="9765195at2"/>
<dbReference type="PhylomeDB" id="P42403"/>
<dbReference type="BioCyc" id="BSUB:BSU03410-MONOMER"/>
<dbReference type="Proteomes" id="UP000001570">
    <property type="component" value="Chromosome"/>
</dbReference>
<dbReference type="GO" id="GO:0005829">
    <property type="term" value="C:cytosol"/>
    <property type="evidence" value="ECO:0000318"/>
    <property type="project" value="GO_Central"/>
</dbReference>
<dbReference type="GO" id="GO:0008706">
    <property type="term" value="F:6-phospho-beta-glucosidase activity"/>
    <property type="evidence" value="ECO:0007669"/>
    <property type="project" value="UniProtKB-EC"/>
</dbReference>
<dbReference type="GO" id="GO:0008422">
    <property type="term" value="F:beta-glucosidase activity"/>
    <property type="evidence" value="ECO:0000318"/>
    <property type="project" value="GO_Central"/>
</dbReference>
<dbReference type="GO" id="GO:0016052">
    <property type="term" value="P:carbohydrate catabolic process"/>
    <property type="evidence" value="ECO:0000318"/>
    <property type="project" value="GO_Central"/>
</dbReference>
<dbReference type="FunFam" id="3.20.20.80:FF:000004">
    <property type="entry name" value="Beta-glucosidase 6-phospho-beta-glucosidase"/>
    <property type="match status" value="1"/>
</dbReference>
<dbReference type="Gene3D" id="3.20.20.80">
    <property type="entry name" value="Glycosidases"/>
    <property type="match status" value="1"/>
</dbReference>
<dbReference type="InterPro" id="IPR001360">
    <property type="entry name" value="Glyco_hydro_1"/>
</dbReference>
<dbReference type="InterPro" id="IPR018120">
    <property type="entry name" value="Glyco_hydro_1_AS"/>
</dbReference>
<dbReference type="InterPro" id="IPR033132">
    <property type="entry name" value="Glyco_hydro_1_N_CS"/>
</dbReference>
<dbReference type="InterPro" id="IPR017853">
    <property type="entry name" value="Glycoside_hydrolase_SF"/>
</dbReference>
<dbReference type="PANTHER" id="PTHR10353:SF136">
    <property type="entry name" value="ARYL-PHOSPHO-BETA-D-GLUCOSIDASE BGLC"/>
    <property type="match status" value="1"/>
</dbReference>
<dbReference type="PANTHER" id="PTHR10353">
    <property type="entry name" value="GLYCOSYL HYDROLASE"/>
    <property type="match status" value="1"/>
</dbReference>
<dbReference type="Pfam" id="PF00232">
    <property type="entry name" value="Glyco_hydro_1"/>
    <property type="match status" value="1"/>
</dbReference>
<dbReference type="PRINTS" id="PR00131">
    <property type="entry name" value="GLHYDRLASE1"/>
</dbReference>
<dbReference type="SUPFAM" id="SSF51445">
    <property type="entry name" value="(Trans)glycosidases"/>
    <property type="match status" value="1"/>
</dbReference>
<dbReference type="PROSITE" id="PS00572">
    <property type="entry name" value="GLYCOSYL_HYDROL_F1_1"/>
    <property type="match status" value="1"/>
</dbReference>
<dbReference type="PROSITE" id="PS00653">
    <property type="entry name" value="GLYCOSYL_HYDROL_F1_2"/>
    <property type="match status" value="1"/>
</dbReference>
<proteinExistence type="evidence at protein level"/>